<sequence length="640" mass="69660">MSRTLTPLLDRICLPQDLRALPESDLVRLADELRTETIDAVSVTGGHLGAGLGVVELTVALHYVFNTPEDRIIWDVGHQTYPHKILTGRRDRIRTLRQEGGLSGFTKRSESVYDPFGAGHSSTSISAGLGMTVASALKAEKRRNIIAVIGDGAMSAGMAYEAMNNAGALDARLIVILNDNDMSIAPPTGAMSAHLARLVSRPAYRSLRERIKMFSKKMPKFFLDKARRSEEFARGFLVGGTLFDELGFYYVGPIDGHNLKHLLPVLKNVREYPNGPVLVHVVTHKGKGYAPAEASSDKYHGVNSFDVVTGKQIKTQSNALAYTKVFSKALIEEATHDNKIVGITAAMPTGTGLDAFAEKFPERMFDVGIAEQHAVTFAAGMACEGYKPFVAIYSTFLQRAYDQVIHDVSIQKLPVRFAIDRAGFVGADGATHAGSFDIVFLATLPEFVVMAPSDEVELMHMVRTAAAYDQGPISFRYPRGEGVGMDLPQRGELLEIGKGRVLREGSRVALVCFGTRMSEVLVAADALIAEGLSTTVADARFAKPLDKDLMRRLACEHEVLVAVEEGAIGGFGAHLLQFLAKEGLLEHGLKVRTLKFPDEYLNHGSPEKVLSRIGLDAVGIVNTVFTALGREIRTVQKVRV</sequence>
<gene>
    <name evidence="1" type="primary">dxs</name>
    <name type="ordered locus">BQ03540</name>
</gene>
<organism>
    <name type="scientific">Bartonella quintana (strain Toulouse)</name>
    <name type="common">Rochalimaea quintana</name>
    <dbReference type="NCBI Taxonomy" id="283165"/>
    <lineage>
        <taxon>Bacteria</taxon>
        <taxon>Pseudomonadati</taxon>
        <taxon>Pseudomonadota</taxon>
        <taxon>Alphaproteobacteria</taxon>
        <taxon>Hyphomicrobiales</taxon>
        <taxon>Bartonellaceae</taxon>
        <taxon>Bartonella</taxon>
    </lineage>
</organism>
<dbReference type="EC" id="2.2.1.7" evidence="1"/>
<dbReference type="EMBL" id="BX897700">
    <property type="protein sequence ID" value="CAF25854.1"/>
    <property type="molecule type" value="Genomic_DNA"/>
</dbReference>
<dbReference type="RefSeq" id="WP_011179148.1">
    <property type="nucleotide sequence ID" value="NC_005955.1"/>
</dbReference>
<dbReference type="SMR" id="Q6G0D4"/>
<dbReference type="KEGG" id="bqu:BQ03540"/>
<dbReference type="eggNOG" id="COG1154">
    <property type="taxonomic scope" value="Bacteria"/>
</dbReference>
<dbReference type="HOGENOM" id="CLU_009227_1_4_5"/>
<dbReference type="OrthoDB" id="9803371at2"/>
<dbReference type="UniPathway" id="UPA00064">
    <property type="reaction ID" value="UER00091"/>
</dbReference>
<dbReference type="Proteomes" id="UP000000597">
    <property type="component" value="Chromosome"/>
</dbReference>
<dbReference type="GO" id="GO:0008661">
    <property type="term" value="F:1-deoxy-D-xylulose-5-phosphate synthase activity"/>
    <property type="evidence" value="ECO:0007669"/>
    <property type="project" value="UniProtKB-UniRule"/>
</dbReference>
<dbReference type="GO" id="GO:0000287">
    <property type="term" value="F:magnesium ion binding"/>
    <property type="evidence" value="ECO:0007669"/>
    <property type="project" value="UniProtKB-UniRule"/>
</dbReference>
<dbReference type="GO" id="GO:0030976">
    <property type="term" value="F:thiamine pyrophosphate binding"/>
    <property type="evidence" value="ECO:0007669"/>
    <property type="project" value="UniProtKB-UniRule"/>
</dbReference>
<dbReference type="GO" id="GO:0052865">
    <property type="term" value="P:1-deoxy-D-xylulose 5-phosphate biosynthetic process"/>
    <property type="evidence" value="ECO:0007669"/>
    <property type="project" value="UniProtKB-UniPathway"/>
</dbReference>
<dbReference type="GO" id="GO:0019682">
    <property type="term" value="P:glyceraldehyde-3-phosphate metabolic process"/>
    <property type="evidence" value="ECO:0007669"/>
    <property type="project" value="UniProtKB-ARBA"/>
</dbReference>
<dbReference type="GO" id="GO:0016114">
    <property type="term" value="P:terpenoid biosynthetic process"/>
    <property type="evidence" value="ECO:0007669"/>
    <property type="project" value="UniProtKB-UniRule"/>
</dbReference>
<dbReference type="GO" id="GO:0009228">
    <property type="term" value="P:thiamine biosynthetic process"/>
    <property type="evidence" value="ECO:0007669"/>
    <property type="project" value="UniProtKB-UniRule"/>
</dbReference>
<dbReference type="CDD" id="cd02007">
    <property type="entry name" value="TPP_DXS"/>
    <property type="match status" value="1"/>
</dbReference>
<dbReference type="CDD" id="cd07033">
    <property type="entry name" value="TPP_PYR_DXS_TK_like"/>
    <property type="match status" value="1"/>
</dbReference>
<dbReference type="FunFam" id="3.40.50.920:FF:000002">
    <property type="entry name" value="1-deoxy-D-xylulose-5-phosphate synthase"/>
    <property type="match status" value="1"/>
</dbReference>
<dbReference type="FunFam" id="3.40.50.970:FF:000005">
    <property type="entry name" value="1-deoxy-D-xylulose-5-phosphate synthase"/>
    <property type="match status" value="1"/>
</dbReference>
<dbReference type="Gene3D" id="3.40.50.920">
    <property type="match status" value="1"/>
</dbReference>
<dbReference type="Gene3D" id="3.40.50.970">
    <property type="match status" value="2"/>
</dbReference>
<dbReference type="HAMAP" id="MF_00315">
    <property type="entry name" value="DXP_synth"/>
    <property type="match status" value="1"/>
</dbReference>
<dbReference type="InterPro" id="IPR005477">
    <property type="entry name" value="Dxylulose-5-P_synthase"/>
</dbReference>
<dbReference type="InterPro" id="IPR029061">
    <property type="entry name" value="THDP-binding"/>
</dbReference>
<dbReference type="InterPro" id="IPR009014">
    <property type="entry name" value="Transketo_C/PFOR_II"/>
</dbReference>
<dbReference type="InterPro" id="IPR005475">
    <property type="entry name" value="Transketolase-like_Pyr-bd"/>
</dbReference>
<dbReference type="InterPro" id="IPR033248">
    <property type="entry name" value="Transketolase_C"/>
</dbReference>
<dbReference type="InterPro" id="IPR049557">
    <property type="entry name" value="Transketolase_CS"/>
</dbReference>
<dbReference type="NCBIfam" id="TIGR00204">
    <property type="entry name" value="dxs"/>
    <property type="match status" value="1"/>
</dbReference>
<dbReference type="NCBIfam" id="NF003933">
    <property type="entry name" value="PRK05444.2-2"/>
    <property type="match status" value="1"/>
</dbReference>
<dbReference type="PANTHER" id="PTHR43322">
    <property type="entry name" value="1-D-DEOXYXYLULOSE 5-PHOSPHATE SYNTHASE-RELATED"/>
    <property type="match status" value="1"/>
</dbReference>
<dbReference type="PANTHER" id="PTHR43322:SF5">
    <property type="entry name" value="1-DEOXY-D-XYLULOSE-5-PHOSPHATE SYNTHASE, CHLOROPLASTIC"/>
    <property type="match status" value="1"/>
</dbReference>
<dbReference type="Pfam" id="PF13292">
    <property type="entry name" value="DXP_synthase_N"/>
    <property type="match status" value="1"/>
</dbReference>
<dbReference type="Pfam" id="PF02779">
    <property type="entry name" value="Transket_pyr"/>
    <property type="match status" value="1"/>
</dbReference>
<dbReference type="Pfam" id="PF02780">
    <property type="entry name" value="Transketolase_C"/>
    <property type="match status" value="1"/>
</dbReference>
<dbReference type="SMART" id="SM00861">
    <property type="entry name" value="Transket_pyr"/>
    <property type="match status" value="1"/>
</dbReference>
<dbReference type="SUPFAM" id="SSF52518">
    <property type="entry name" value="Thiamin diphosphate-binding fold (THDP-binding)"/>
    <property type="match status" value="2"/>
</dbReference>
<dbReference type="SUPFAM" id="SSF52922">
    <property type="entry name" value="TK C-terminal domain-like"/>
    <property type="match status" value="1"/>
</dbReference>
<dbReference type="PROSITE" id="PS00801">
    <property type="entry name" value="TRANSKETOLASE_1"/>
    <property type="match status" value="1"/>
</dbReference>
<comment type="function">
    <text evidence="1">Catalyzes the acyloin condensation reaction between C atoms 2 and 3 of pyruvate and glyceraldehyde 3-phosphate to yield 1-deoxy-D-xylulose-5-phosphate (DXP).</text>
</comment>
<comment type="catalytic activity">
    <reaction evidence="1">
        <text>D-glyceraldehyde 3-phosphate + pyruvate + H(+) = 1-deoxy-D-xylulose 5-phosphate + CO2</text>
        <dbReference type="Rhea" id="RHEA:12605"/>
        <dbReference type="ChEBI" id="CHEBI:15361"/>
        <dbReference type="ChEBI" id="CHEBI:15378"/>
        <dbReference type="ChEBI" id="CHEBI:16526"/>
        <dbReference type="ChEBI" id="CHEBI:57792"/>
        <dbReference type="ChEBI" id="CHEBI:59776"/>
        <dbReference type="EC" id="2.2.1.7"/>
    </reaction>
</comment>
<comment type="cofactor">
    <cofactor evidence="1">
        <name>Mg(2+)</name>
        <dbReference type="ChEBI" id="CHEBI:18420"/>
    </cofactor>
    <text evidence="1">Binds 1 Mg(2+) ion per subunit.</text>
</comment>
<comment type="cofactor">
    <cofactor evidence="1">
        <name>thiamine diphosphate</name>
        <dbReference type="ChEBI" id="CHEBI:58937"/>
    </cofactor>
    <text evidence="1">Binds 1 thiamine pyrophosphate per subunit.</text>
</comment>
<comment type="pathway">
    <text evidence="1">Metabolic intermediate biosynthesis; 1-deoxy-D-xylulose 5-phosphate biosynthesis; 1-deoxy-D-xylulose 5-phosphate from D-glyceraldehyde 3-phosphate and pyruvate: step 1/1.</text>
</comment>
<comment type="subunit">
    <text evidence="1">Homodimer.</text>
</comment>
<comment type="similarity">
    <text evidence="1">Belongs to the transketolase family. DXPS subfamily.</text>
</comment>
<accession>Q6G0D4</accession>
<feature type="chain" id="PRO_0000256381" description="1-deoxy-D-xylulose-5-phosphate synthase">
    <location>
        <begin position="1"/>
        <end position="640"/>
    </location>
</feature>
<feature type="binding site" evidence="1">
    <location>
        <position position="78"/>
    </location>
    <ligand>
        <name>thiamine diphosphate</name>
        <dbReference type="ChEBI" id="CHEBI:58937"/>
    </ligand>
</feature>
<feature type="binding site" evidence="1">
    <location>
        <begin position="119"/>
        <end position="121"/>
    </location>
    <ligand>
        <name>thiamine diphosphate</name>
        <dbReference type="ChEBI" id="CHEBI:58937"/>
    </ligand>
</feature>
<feature type="binding site" evidence="1">
    <location>
        <position position="151"/>
    </location>
    <ligand>
        <name>Mg(2+)</name>
        <dbReference type="ChEBI" id="CHEBI:18420"/>
    </ligand>
</feature>
<feature type="binding site" evidence="1">
    <location>
        <begin position="152"/>
        <end position="153"/>
    </location>
    <ligand>
        <name>thiamine diphosphate</name>
        <dbReference type="ChEBI" id="CHEBI:58937"/>
    </ligand>
</feature>
<feature type="binding site" evidence="1">
    <location>
        <position position="180"/>
    </location>
    <ligand>
        <name>Mg(2+)</name>
        <dbReference type="ChEBI" id="CHEBI:18420"/>
    </ligand>
</feature>
<feature type="binding site" evidence="1">
    <location>
        <position position="180"/>
    </location>
    <ligand>
        <name>thiamine diphosphate</name>
        <dbReference type="ChEBI" id="CHEBI:58937"/>
    </ligand>
</feature>
<feature type="binding site" evidence="1">
    <location>
        <position position="289"/>
    </location>
    <ligand>
        <name>thiamine diphosphate</name>
        <dbReference type="ChEBI" id="CHEBI:58937"/>
    </ligand>
</feature>
<feature type="binding site" evidence="1">
    <location>
        <position position="371"/>
    </location>
    <ligand>
        <name>thiamine diphosphate</name>
        <dbReference type="ChEBI" id="CHEBI:58937"/>
    </ligand>
</feature>
<protein>
    <recommendedName>
        <fullName evidence="1">1-deoxy-D-xylulose-5-phosphate synthase</fullName>
        <ecNumber evidence="1">2.2.1.7</ecNumber>
    </recommendedName>
    <alternativeName>
        <fullName evidence="1">1-deoxyxylulose-5-phosphate synthase</fullName>
        <shortName evidence="1">DXP synthase</shortName>
        <shortName evidence="1">DXPS</shortName>
    </alternativeName>
</protein>
<evidence type="ECO:0000255" key="1">
    <source>
        <dbReference type="HAMAP-Rule" id="MF_00315"/>
    </source>
</evidence>
<name>DXS_BARQU</name>
<proteinExistence type="inferred from homology"/>
<keyword id="KW-0414">Isoprene biosynthesis</keyword>
<keyword id="KW-0460">Magnesium</keyword>
<keyword id="KW-0479">Metal-binding</keyword>
<keyword id="KW-0784">Thiamine biosynthesis</keyword>
<keyword id="KW-0786">Thiamine pyrophosphate</keyword>
<keyword id="KW-0808">Transferase</keyword>
<reference key="1">
    <citation type="journal article" date="2004" name="Proc. Natl. Acad. Sci. U.S.A.">
        <title>The louse-borne human pathogen Bartonella quintana is a genomic derivative of the zoonotic agent Bartonella henselae.</title>
        <authorList>
            <person name="Alsmark U.C.M."/>
            <person name="Frank A.C."/>
            <person name="Karlberg E.O."/>
            <person name="Legault B.-A."/>
            <person name="Ardell D.H."/>
            <person name="Canbaeck B."/>
            <person name="Eriksson A.-S."/>
            <person name="Naeslund A.K."/>
            <person name="Handley S.A."/>
            <person name="Huvet M."/>
            <person name="La Scola B."/>
            <person name="Holmberg M."/>
            <person name="Andersson S.G.E."/>
        </authorList>
    </citation>
    <scope>NUCLEOTIDE SEQUENCE [LARGE SCALE GENOMIC DNA]</scope>
    <source>
        <strain>Toulouse</strain>
    </source>
</reference>